<dbReference type="EC" id="2.7.4.22" evidence="1"/>
<dbReference type="EMBL" id="CP000124">
    <property type="protein sequence ID" value="ABA49783.1"/>
    <property type="status" value="ALT_INIT"/>
    <property type="molecule type" value="Genomic_DNA"/>
</dbReference>
<dbReference type="RefSeq" id="WP_004193606.1">
    <property type="nucleotide sequence ID" value="NC_007434.1"/>
</dbReference>
<dbReference type="SMR" id="Q3JR30"/>
<dbReference type="EnsemblBacteria" id="ABA49783">
    <property type="protein sequence ID" value="ABA49783"/>
    <property type="gene ID" value="BURPS1710b_2581"/>
</dbReference>
<dbReference type="GeneID" id="93060698"/>
<dbReference type="KEGG" id="bpm:BURPS1710b_2581"/>
<dbReference type="HOGENOM" id="CLU_033861_0_0_4"/>
<dbReference type="UniPathway" id="UPA00159">
    <property type="reaction ID" value="UER00275"/>
</dbReference>
<dbReference type="Proteomes" id="UP000002700">
    <property type="component" value="Chromosome I"/>
</dbReference>
<dbReference type="GO" id="GO:0005829">
    <property type="term" value="C:cytosol"/>
    <property type="evidence" value="ECO:0007669"/>
    <property type="project" value="TreeGrafter"/>
</dbReference>
<dbReference type="GO" id="GO:0005524">
    <property type="term" value="F:ATP binding"/>
    <property type="evidence" value="ECO:0007669"/>
    <property type="project" value="UniProtKB-KW"/>
</dbReference>
<dbReference type="GO" id="GO:0033862">
    <property type="term" value="F:UMP kinase activity"/>
    <property type="evidence" value="ECO:0007669"/>
    <property type="project" value="UniProtKB-EC"/>
</dbReference>
<dbReference type="GO" id="GO:0044210">
    <property type="term" value="P:'de novo' CTP biosynthetic process"/>
    <property type="evidence" value="ECO:0007669"/>
    <property type="project" value="UniProtKB-UniRule"/>
</dbReference>
<dbReference type="GO" id="GO:0006225">
    <property type="term" value="P:UDP biosynthetic process"/>
    <property type="evidence" value="ECO:0007669"/>
    <property type="project" value="TreeGrafter"/>
</dbReference>
<dbReference type="CDD" id="cd04254">
    <property type="entry name" value="AAK_UMPK-PyrH-Ec"/>
    <property type="match status" value="1"/>
</dbReference>
<dbReference type="FunFam" id="3.40.1160.10:FF:000001">
    <property type="entry name" value="Uridylate kinase"/>
    <property type="match status" value="1"/>
</dbReference>
<dbReference type="Gene3D" id="3.40.1160.10">
    <property type="entry name" value="Acetylglutamate kinase-like"/>
    <property type="match status" value="1"/>
</dbReference>
<dbReference type="HAMAP" id="MF_01220_B">
    <property type="entry name" value="PyrH_B"/>
    <property type="match status" value="1"/>
</dbReference>
<dbReference type="InterPro" id="IPR036393">
    <property type="entry name" value="AceGlu_kinase-like_sf"/>
</dbReference>
<dbReference type="InterPro" id="IPR001048">
    <property type="entry name" value="Asp/Glu/Uridylate_kinase"/>
</dbReference>
<dbReference type="InterPro" id="IPR011817">
    <property type="entry name" value="Uridylate_kinase"/>
</dbReference>
<dbReference type="InterPro" id="IPR015963">
    <property type="entry name" value="Uridylate_kinase_bac"/>
</dbReference>
<dbReference type="NCBIfam" id="TIGR02075">
    <property type="entry name" value="pyrH_bact"/>
    <property type="match status" value="1"/>
</dbReference>
<dbReference type="PANTHER" id="PTHR42833">
    <property type="entry name" value="URIDYLATE KINASE"/>
    <property type="match status" value="1"/>
</dbReference>
<dbReference type="PANTHER" id="PTHR42833:SF4">
    <property type="entry name" value="URIDYLATE KINASE PUMPKIN, CHLOROPLASTIC"/>
    <property type="match status" value="1"/>
</dbReference>
<dbReference type="Pfam" id="PF00696">
    <property type="entry name" value="AA_kinase"/>
    <property type="match status" value="1"/>
</dbReference>
<dbReference type="PIRSF" id="PIRSF005650">
    <property type="entry name" value="Uridylate_kin"/>
    <property type="match status" value="1"/>
</dbReference>
<dbReference type="SUPFAM" id="SSF53633">
    <property type="entry name" value="Carbamate kinase-like"/>
    <property type="match status" value="1"/>
</dbReference>
<comment type="function">
    <text evidence="1">Catalyzes the reversible phosphorylation of UMP to UDP.</text>
</comment>
<comment type="catalytic activity">
    <reaction evidence="1">
        <text>UMP + ATP = UDP + ADP</text>
        <dbReference type="Rhea" id="RHEA:24400"/>
        <dbReference type="ChEBI" id="CHEBI:30616"/>
        <dbReference type="ChEBI" id="CHEBI:57865"/>
        <dbReference type="ChEBI" id="CHEBI:58223"/>
        <dbReference type="ChEBI" id="CHEBI:456216"/>
        <dbReference type="EC" id="2.7.4.22"/>
    </reaction>
</comment>
<comment type="activity regulation">
    <text evidence="1">Inhibited by UTP.</text>
</comment>
<comment type="pathway">
    <text evidence="1">Pyrimidine metabolism; CTP biosynthesis via de novo pathway; UDP from UMP (UMPK route): step 1/1.</text>
</comment>
<comment type="subunit">
    <text evidence="1">Homohexamer.</text>
</comment>
<comment type="subcellular location">
    <subcellularLocation>
        <location evidence="1">Cytoplasm</location>
    </subcellularLocation>
</comment>
<comment type="similarity">
    <text evidence="1">Belongs to the UMP kinase family.</text>
</comment>
<comment type="sequence caution" evidence="2">
    <conflict type="erroneous initiation">
        <sequence resource="EMBL-CDS" id="ABA49783"/>
    </conflict>
</comment>
<reference key="1">
    <citation type="journal article" date="2010" name="Genome Biol. Evol.">
        <title>Continuing evolution of Burkholderia mallei through genome reduction and large-scale rearrangements.</title>
        <authorList>
            <person name="Losada L."/>
            <person name="Ronning C.M."/>
            <person name="DeShazer D."/>
            <person name="Woods D."/>
            <person name="Fedorova N."/>
            <person name="Kim H.S."/>
            <person name="Shabalina S.A."/>
            <person name="Pearson T.R."/>
            <person name="Brinkac L."/>
            <person name="Tan P."/>
            <person name="Nandi T."/>
            <person name="Crabtree J."/>
            <person name="Badger J."/>
            <person name="Beckstrom-Sternberg S."/>
            <person name="Saqib M."/>
            <person name="Schutzer S.E."/>
            <person name="Keim P."/>
            <person name="Nierman W.C."/>
        </authorList>
    </citation>
    <scope>NUCLEOTIDE SEQUENCE [LARGE SCALE GENOMIC DNA]</scope>
    <source>
        <strain>1710b</strain>
    </source>
</reference>
<accession>Q3JR30</accession>
<gene>
    <name evidence="1" type="primary">pyrH</name>
    <name type="ordered locus">BURPS1710b_2581</name>
</gene>
<proteinExistence type="inferred from homology"/>
<name>PYRH_BURP1</name>
<protein>
    <recommendedName>
        <fullName evidence="1">Uridylate kinase</fullName>
        <shortName evidence="1">UK</shortName>
        <ecNumber evidence="1">2.7.4.22</ecNumber>
    </recommendedName>
    <alternativeName>
        <fullName evidence="1">Uridine monophosphate kinase</fullName>
        <shortName evidence="1">UMP kinase</shortName>
        <shortName evidence="1">UMPK</shortName>
    </alternativeName>
</protein>
<organism>
    <name type="scientific">Burkholderia pseudomallei (strain 1710b)</name>
    <dbReference type="NCBI Taxonomy" id="320372"/>
    <lineage>
        <taxon>Bacteria</taxon>
        <taxon>Pseudomonadati</taxon>
        <taxon>Pseudomonadota</taxon>
        <taxon>Betaproteobacteria</taxon>
        <taxon>Burkholderiales</taxon>
        <taxon>Burkholderiaceae</taxon>
        <taxon>Burkholderia</taxon>
        <taxon>pseudomallei group</taxon>
    </lineage>
</organism>
<feature type="chain" id="PRO_0000323814" description="Uridylate kinase">
    <location>
        <begin position="1"/>
        <end position="237"/>
    </location>
</feature>
<feature type="binding site" evidence="1">
    <location>
        <begin position="11"/>
        <end position="14"/>
    </location>
    <ligand>
        <name>ATP</name>
        <dbReference type="ChEBI" id="CHEBI:30616"/>
    </ligand>
</feature>
<feature type="binding site" evidence="1">
    <location>
        <position position="53"/>
    </location>
    <ligand>
        <name>UMP</name>
        <dbReference type="ChEBI" id="CHEBI:57865"/>
    </ligand>
</feature>
<feature type="binding site" evidence="1">
    <location>
        <position position="54"/>
    </location>
    <ligand>
        <name>ATP</name>
        <dbReference type="ChEBI" id="CHEBI:30616"/>
    </ligand>
</feature>
<feature type="binding site" evidence="1">
    <location>
        <position position="58"/>
    </location>
    <ligand>
        <name>ATP</name>
        <dbReference type="ChEBI" id="CHEBI:30616"/>
    </ligand>
</feature>
<feature type="binding site" evidence="1">
    <location>
        <position position="73"/>
    </location>
    <ligand>
        <name>UMP</name>
        <dbReference type="ChEBI" id="CHEBI:57865"/>
    </ligand>
</feature>
<feature type="binding site" evidence="1">
    <location>
        <begin position="134"/>
        <end position="141"/>
    </location>
    <ligand>
        <name>UMP</name>
        <dbReference type="ChEBI" id="CHEBI:57865"/>
    </ligand>
</feature>
<feature type="binding site" evidence="1">
    <location>
        <position position="161"/>
    </location>
    <ligand>
        <name>ATP</name>
        <dbReference type="ChEBI" id="CHEBI:30616"/>
    </ligand>
</feature>
<feature type="binding site" evidence="1">
    <location>
        <position position="167"/>
    </location>
    <ligand>
        <name>ATP</name>
        <dbReference type="ChEBI" id="CHEBI:30616"/>
    </ligand>
</feature>
<feature type="binding site" evidence="1">
    <location>
        <position position="170"/>
    </location>
    <ligand>
        <name>ATP</name>
        <dbReference type="ChEBI" id="CHEBI:30616"/>
    </ligand>
</feature>
<evidence type="ECO:0000255" key="1">
    <source>
        <dbReference type="HAMAP-Rule" id="MF_01220"/>
    </source>
</evidence>
<evidence type="ECO:0000305" key="2"/>
<sequence length="237" mass="25329">MPNAYKRVLLKLSGEALMGDDAFGINRATIERMVADIAEVVRLGTQLAVVIGGGNIFRGVAGGAAGMDRATADYMGMLATMMNALALQDAMRHAGIEARVQSALRMDQVVEPYIRPRAIRQLEEGKVVIFAAGTGNPFFTTDTAAALRGSEVGAEVVLKATKVDGVYSADPKKDPSATRYSSISFDEAIGRNLQVMDATAFALCRDQKLPIRVFSINKPGALKRIVQGEDEGTLVHV</sequence>
<keyword id="KW-0067">ATP-binding</keyword>
<keyword id="KW-0963">Cytoplasm</keyword>
<keyword id="KW-0418">Kinase</keyword>
<keyword id="KW-0547">Nucleotide-binding</keyword>
<keyword id="KW-0665">Pyrimidine biosynthesis</keyword>
<keyword id="KW-0808">Transferase</keyword>